<dbReference type="EMBL" id="AM180088">
    <property type="protein sequence ID" value="CAJ52927.1"/>
    <property type="molecule type" value="Genomic_DNA"/>
</dbReference>
<dbReference type="RefSeq" id="WP_011572040.1">
    <property type="nucleotide sequence ID" value="NC_008212.1"/>
</dbReference>
<dbReference type="SMR" id="Q18GH1"/>
<dbReference type="STRING" id="362976.HQ_2820A"/>
<dbReference type="GeneID" id="4194605"/>
<dbReference type="KEGG" id="hwa:HQ_2820A"/>
<dbReference type="eggNOG" id="arCOG00779">
    <property type="taxonomic scope" value="Archaea"/>
</dbReference>
<dbReference type="HOGENOM" id="CLU_109163_0_0_2"/>
<dbReference type="Proteomes" id="UP000001975">
    <property type="component" value="Chromosome"/>
</dbReference>
<dbReference type="GO" id="GO:0015934">
    <property type="term" value="C:large ribosomal subunit"/>
    <property type="evidence" value="ECO:0007669"/>
    <property type="project" value="InterPro"/>
</dbReference>
<dbReference type="GO" id="GO:0019843">
    <property type="term" value="F:rRNA binding"/>
    <property type="evidence" value="ECO:0007669"/>
    <property type="project" value="UniProtKB-UniRule"/>
</dbReference>
<dbReference type="GO" id="GO:0003735">
    <property type="term" value="F:structural constituent of ribosome"/>
    <property type="evidence" value="ECO:0007669"/>
    <property type="project" value="InterPro"/>
</dbReference>
<dbReference type="GO" id="GO:0006412">
    <property type="term" value="P:translation"/>
    <property type="evidence" value="ECO:0007669"/>
    <property type="project" value="UniProtKB-UniRule"/>
</dbReference>
<dbReference type="Gene3D" id="3.100.10.10">
    <property type="match status" value="1"/>
</dbReference>
<dbReference type="Gene3D" id="4.10.990.10">
    <property type="match status" value="1"/>
</dbReference>
<dbReference type="HAMAP" id="MF_01341">
    <property type="entry name" value="Ribosomal_uL15"/>
    <property type="match status" value="1"/>
</dbReference>
<dbReference type="InterPro" id="IPR027386">
    <property type="entry name" value="Rbsml_uL15_N"/>
</dbReference>
<dbReference type="InterPro" id="IPR030878">
    <property type="entry name" value="Ribosomal_uL15"/>
</dbReference>
<dbReference type="InterPro" id="IPR021131">
    <property type="entry name" value="Ribosomal_uL15/eL18"/>
</dbReference>
<dbReference type="InterPro" id="IPR036227">
    <property type="entry name" value="Ribosomal_uL15/eL18_sf"/>
</dbReference>
<dbReference type="InterPro" id="IPR001196">
    <property type="entry name" value="Ribosomal_uL15_CS"/>
</dbReference>
<dbReference type="Pfam" id="PF00828">
    <property type="entry name" value="Ribosomal_L27A"/>
    <property type="match status" value="1"/>
</dbReference>
<dbReference type="SUPFAM" id="SSF52080">
    <property type="entry name" value="Ribosomal proteins L15p and L18e"/>
    <property type="match status" value="1"/>
</dbReference>
<dbReference type="PROSITE" id="PS00475">
    <property type="entry name" value="RIBOSOMAL_L15"/>
    <property type="match status" value="1"/>
</dbReference>
<protein>
    <recommendedName>
        <fullName evidence="1">Large ribosomal subunit protein uL15</fullName>
    </recommendedName>
    <alternativeName>
        <fullName evidence="3">50S ribosomal protein L15</fullName>
    </alternativeName>
</protein>
<organism>
    <name type="scientific">Haloquadratum walsbyi (strain DSM 16790 / HBSQ001)</name>
    <dbReference type="NCBI Taxonomy" id="362976"/>
    <lineage>
        <taxon>Archaea</taxon>
        <taxon>Methanobacteriati</taxon>
        <taxon>Methanobacteriota</taxon>
        <taxon>Stenosarchaea group</taxon>
        <taxon>Halobacteria</taxon>
        <taxon>Halobacteriales</taxon>
        <taxon>Haloferacaceae</taxon>
        <taxon>Haloquadratum</taxon>
    </lineage>
</organism>
<name>RL15_HALWD</name>
<proteinExistence type="inferred from homology"/>
<keyword id="KW-1185">Reference proteome</keyword>
<keyword id="KW-0687">Ribonucleoprotein</keyword>
<keyword id="KW-0689">Ribosomal protein</keyword>
<keyword id="KW-0694">RNA-binding</keyword>
<keyword id="KW-0699">rRNA-binding</keyword>
<sequence>MTSKKRRQRGSRTHGGGTHKNRRGAGHRGGRGRAGRDKHEQHNYEPIGKHGFKRPPGAERTVAEISVQELDEGAALFVAEETAEFDDGAYHIDARDIADDADSSDITKVLGDGQVRQELHVIADAFSDTARTLIEDAGGSATLTEQGKSIAVGEDEEPNSNDEN</sequence>
<reference key="1">
    <citation type="journal article" date="2006" name="BMC Genomics">
        <title>The genome of the square archaeon Haloquadratum walsbyi: life at the limits of water activity.</title>
        <authorList>
            <person name="Bolhuis H."/>
            <person name="Palm P."/>
            <person name="Wende A."/>
            <person name="Falb M."/>
            <person name="Rampp M."/>
            <person name="Rodriguez-Valera F."/>
            <person name="Pfeiffer F."/>
            <person name="Oesterhelt D."/>
        </authorList>
    </citation>
    <scope>NUCLEOTIDE SEQUENCE [LARGE SCALE GENOMIC DNA]</scope>
    <source>
        <strain>DSM 16790 / HBSQ001</strain>
    </source>
</reference>
<gene>
    <name evidence="1" type="primary">rpl15</name>
    <name type="ordered locus">HQ_2820A</name>
</gene>
<evidence type="ECO:0000255" key="1">
    <source>
        <dbReference type="HAMAP-Rule" id="MF_01341"/>
    </source>
</evidence>
<evidence type="ECO:0000256" key="2">
    <source>
        <dbReference type="SAM" id="MobiDB-lite"/>
    </source>
</evidence>
<evidence type="ECO:0000305" key="3"/>
<comment type="function">
    <text evidence="1">Binds to the 23S rRNA.</text>
</comment>
<comment type="subunit">
    <text evidence="1">Part of the 50S ribosomal subunit.</text>
</comment>
<comment type="similarity">
    <text evidence="1">Belongs to the universal ribosomal protein uL15 family.</text>
</comment>
<accession>Q18GH1</accession>
<feature type="chain" id="PRO_0000251593" description="Large ribosomal subunit protein uL15">
    <location>
        <begin position="1"/>
        <end position="164"/>
    </location>
</feature>
<feature type="region of interest" description="Disordered" evidence="2">
    <location>
        <begin position="1"/>
        <end position="59"/>
    </location>
</feature>
<feature type="region of interest" description="Disordered" evidence="2">
    <location>
        <begin position="137"/>
        <end position="164"/>
    </location>
</feature>
<feature type="compositionally biased region" description="Basic residues" evidence="2">
    <location>
        <begin position="1"/>
        <end position="33"/>
    </location>
</feature>
<feature type="compositionally biased region" description="Basic and acidic residues" evidence="2">
    <location>
        <begin position="34"/>
        <end position="43"/>
    </location>
</feature>
<feature type="compositionally biased region" description="Acidic residues" evidence="2">
    <location>
        <begin position="153"/>
        <end position="164"/>
    </location>
</feature>